<keyword id="KW-0963">Cytoplasm</keyword>
<keyword id="KW-0251">Elongation factor</keyword>
<keyword id="KW-0648">Protein biosynthesis</keyword>
<evidence type="ECO:0000255" key="1">
    <source>
        <dbReference type="HAMAP-Rule" id="MF_00141"/>
    </source>
</evidence>
<reference key="1">
    <citation type="submission" date="2008-03" db="EMBL/GenBank/DDBJ databases">
        <title>Complete sequence of chromosome of Methylobacterium radiotolerans JCM 2831.</title>
        <authorList>
            <consortium name="US DOE Joint Genome Institute"/>
            <person name="Copeland A."/>
            <person name="Lucas S."/>
            <person name="Lapidus A."/>
            <person name="Glavina del Rio T."/>
            <person name="Dalin E."/>
            <person name="Tice H."/>
            <person name="Bruce D."/>
            <person name="Goodwin L."/>
            <person name="Pitluck S."/>
            <person name="Kiss H."/>
            <person name="Brettin T."/>
            <person name="Detter J.C."/>
            <person name="Han C."/>
            <person name="Kuske C.R."/>
            <person name="Schmutz J."/>
            <person name="Larimer F."/>
            <person name="Land M."/>
            <person name="Hauser L."/>
            <person name="Kyrpides N."/>
            <person name="Mikhailova N."/>
            <person name="Marx C.J."/>
            <person name="Richardson P."/>
        </authorList>
    </citation>
    <scope>NUCLEOTIDE SEQUENCE [LARGE SCALE GENOMIC DNA]</scope>
    <source>
        <strain>ATCC 27329 / DSM 1819 / JCM 2831 / NBRC 15690 / NCIMB 10815 / 0-1</strain>
    </source>
</reference>
<name>EFP_METRJ</name>
<comment type="function">
    <text evidence="1">Involved in peptide bond synthesis. Stimulates efficient translation and peptide-bond synthesis on native or reconstituted 70S ribosomes in vitro. Probably functions indirectly by altering the affinity of the ribosome for aminoacyl-tRNA, thus increasing their reactivity as acceptors for peptidyl transferase.</text>
</comment>
<comment type="pathway">
    <text evidence="1">Protein biosynthesis; polypeptide chain elongation.</text>
</comment>
<comment type="subcellular location">
    <subcellularLocation>
        <location evidence="1">Cytoplasm</location>
    </subcellularLocation>
</comment>
<comment type="similarity">
    <text evidence="1">Belongs to the elongation factor P family.</text>
</comment>
<accession>B1M2B1</accession>
<proteinExistence type="inferred from homology"/>
<sequence>MKVIASTLRKGNVVEKDGKLYVILFAENIHPGKGTPVTQLDMRRITDGVKVSERYRTTEQVERAFVEDREHTFLYSDGEGFHFMNPENYEQIAVPEDVVGDAAPYLQEGMAVMLSVHNGVPLTIELPQRVTLEVAETEPVLKGQTASSSYKPATLSNGVRTTVPPHIAAGTRVVVMTADGSYVERAKD</sequence>
<dbReference type="EMBL" id="CP001001">
    <property type="protein sequence ID" value="ACB24722.1"/>
    <property type="molecule type" value="Genomic_DNA"/>
</dbReference>
<dbReference type="SMR" id="B1M2B1"/>
<dbReference type="STRING" id="426355.Mrad2831_2738"/>
<dbReference type="KEGG" id="mrd:Mrad2831_2738"/>
<dbReference type="eggNOG" id="COG0231">
    <property type="taxonomic scope" value="Bacteria"/>
</dbReference>
<dbReference type="HOGENOM" id="CLU_074944_1_1_5"/>
<dbReference type="OrthoDB" id="9801844at2"/>
<dbReference type="UniPathway" id="UPA00345"/>
<dbReference type="Proteomes" id="UP000006589">
    <property type="component" value="Chromosome"/>
</dbReference>
<dbReference type="GO" id="GO:0005737">
    <property type="term" value="C:cytoplasm"/>
    <property type="evidence" value="ECO:0007669"/>
    <property type="project" value="UniProtKB-SubCell"/>
</dbReference>
<dbReference type="GO" id="GO:0003746">
    <property type="term" value="F:translation elongation factor activity"/>
    <property type="evidence" value="ECO:0007669"/>
    <property type="project" value="UniProtKB-UniRule"/>
</dbReference>
<dbReference type="GO" id="GO:0043043">
    <property type="term" value="P:peptide biosynthetic process"/>
    <property type="evidence" value="ECO:0007669"/>
    <property type="project" value="InterPro"/>
</dbReference>
<dbReference type="CDD" id="cd04470">
    <property type="entry name" value="S1_EF-P_repeat_1"/>
    <property type="match status" value="1"/>
</dbReference>
<dbReference type="CDD" id="cd05794">
    <property type="entry name" value="S1_EF-P_repeat_2"/>
    <property type="match status" value="1"/>
</dbReference>
<dbReference type="FunFam" id="2.40.50.140:FF:000004">
    <property type="entry name" value="Elongation factor P"/>
    <property type="match status" value="1"/>
</dbReference>
<dbReference type="FunFam" id="2.40.50.140:FF:000009">
    <property type="entry name" value="Elongation factor P"/>
    <property type="match status" value="1"/>
</dbReference>
<dbReference type="Gene3D" id="2.30.30.30">
    <property type="match status" value="1"/>
</dbReference>
<dbReference type="Gene3D" id="2.40.50.140">
    <property type="entry name" value="Nucleic acid-binding proteins"/>
    <property type="match status" value="2"/>
</dbReference>
<dbReference type="HAMAP" id="MF_00141">
    <property type="entry name" value="EF_P"/>
    <property type="match status" value="1"/>
</dbReference>
<dbReference type="InterPro" id="IPR015365">
    <property type="entry name" value="Elong-fact-P_C"/>
</dbReference>
<dbReference type="InterPro" id="IPR012340">
    <property type="entry name" value="NA-bd_OB-fold"/>
</dbReference>
<dbReference type="InterPro" id="IPR014722">
    <property type="entry name" value="Rib_uL2_dom2"/>
</dbReference>
<dbReference type="InterPro" id="IPR020599">
    <property type="entry name" value="Transl_elong_fac_P/YeiP"/>
</dbReference>
<dbReference type="InterPro" id="IPR013185">
    <property type="entry name" value="Transl_elong_KOW-like"/>
</dbReference>
<dbReference type="InterPro" id="IPR001059">
    <property type="entry name" value="Transl_elong_P/YeiP_cen"/>
</dbReference>
<dbReference type="InterPro" id="IPR013852">
    <property type="entry name" value="Transl_elong_P/YeiP_CS"/>
</dbReference>
<dbReference type="InterPro" id="IPR011768">
    <property type="entry name" value="Transl_elongation_fac_P"/>
</dbReference>
<dbReference type="InterPro" id="IPR008991">
    <property type="entry name" value="Translation_prot_SH3-like_sf"/>
</dbReference>
<dbReference type="NCBIfam" id="TIGR00038">
    <property type="entry name" value="efp"/>
    <property type="match status" value="1"/>
</dbReference>
<dbReference type="NCBIfam" id="NF001810">
    <property type="entry name" value="PRK00529.1"/>
    <property type="match status" value="1"/>
</dbReference>
<dbReference type="PANTHER" id="PTHR30053">
    <property type="entry name" value="ELONGATION FACTOR P"/>
    <property type="match status" value="1"/>
</dbReference>
<dbReference type="PANTHER" id="PTHR30053:SF14">
    <property type="entry name" value="TRANSLATION ELONGATION FACTOR KOW-LIKE DOMAIN-CONTAINING PROTEIN"/>
    <property type="match status" value="1"/>
</dbReference>
<dbReference type="Pfam" id="PF01132">
    <property type="entry name" value="EFP"/>
    <property type="match status" value="1"/>
</dbReference>
<dbReference type="Pfam" id="PF08207">
    <property type="entry name" value="EFP_N"/>
    <property type="match status" value="1"/>
</dbReference>
<dbReference type="Pfam" id="PF09285">
    <property type="entry name" value="Elong-fact-P_C"/>
    <property type="match status" value="1"/>
</dbReference>
<dbReference type="PIRSF" id="PIRSF005901">
    <property type="entry name" value="EF-P"/>
    <property type="match status" value="1"/>
</dbReference>
<dbReference type="SMART" id="SM01185">
    <property type="entry name" value="EFP"/>
    <property type="match status" value="1"/>
</dbReference>
<dbReference type="SMART" id="SM00841">
    <property type="entry name" value="Elong-fact-P_C"/>
    <property type="match status" value="1"/>
</dbReference>
<dbReference type="SUPFAM" id="SSF50249">
    <property type="entry name" value="Nucleic acid-binding proteins"/>
    <property type="match status" value="2"/>
</dbReference>
<dbReference type="SUPFAM" id="SSF50104">
    <property type="entry name" value="Translation proteins SH3-like domain"/>
    <property type="match status" value="1"/>
</dbReference>
<dbReference type="PROSITE" id="PS01275">
    <property type="entry name" value="EFP"/>
    <property type="match status" value="1"/>
</dbReference>
<gene>
    <name evidence="1" type="primary">efp</name>
    <name type="ordered locus">Mrad2831_2738</name>
</gene>
<feature type="chain" id="PRO_1000096175" description="Elongation factor P">
    <location>
        <begin position="1"/>
        <end position="188"/>
    </location>
</feature>
<organism>
    <name type="scientific">Methylobacterium radiotolerans (strain ATCC 27329 / DSM 1819 / JCM 2831 / NBRC 15690 / NCIMB 10815 / 0-1)</name>
    <dbReference type="NCBI Taxonomy" id="426355"/>
    <lineage>
        <taxon>Bacteria</taxon>
        <taxon>Pseudomonadati</taxon>
        <taxon>Pseudomonadota</taxon>
        <taxon>Alphaproteobacteria</taxon>
        <taxon>Hyphomicrobiales</taxon>
        <taxon>Methylobacteriaceae</taxon>
        <taxon>Methylobacterium</taxon>
    </lineage>
</organism>
<protein>
    <recommendedName>
        <fullName evidence="1">Elongation factor P</fullName>
        <shortName evidence="1">EF-P</shortName>
    </recommendedName>
</protein>